<proteinExistence type="inferred from homology"/>
<feature type="chain" id="PRO_0000434766" description="Ferredoxin MycCII">
    <location>
        <begin position="1"/>
        <end position="74"/>
    </location>
</feature>
<feature type="domain" description="4Fe-4S ferredoxin-type" evidence="2">
    <location>
        <begin position="1"/>
        <end position="29"/>
    </location>
</feature>
<feature type="binding site" evidence="1">
    <location>
        <position position="10"/>
    </location>
    <ligand>
        <name>[3Fe-4S] cluster</name>
        <dbReference type="ChEBI" id="CHEBI:21137"/>
    </ligand>
</feature>
<feature type="binding site" evidence="1">
    <location>
        <position position="16"/>
    </location>
    <ligand>
        <name>[3Fe-4S] cluster</name>
        <dbReference type="ChEBI" id="CHEBI:21137"/>
    </ligand>
</feature>
<feature type="binding site" evidence="1">
    <location>
        <position position="54"/>
    </location>
    <ligand>
        <name>[3Fe-4S] cluster</name>
        <dbReference type="ChEBI" id="CHEBI:21137"/>
    </ligand>
</feature>
<protein>
    <recommendedName>
        <fullName evidence="5">Ferredoxin MycCII</fullName>
    </recommendedName>
    <alternativeName>
        <fullName evidence="6">Mycinamicin biosynthesis protein CII</fullName>
    </alternativeName>
</protein>
<reference key="1">
    <citation type="journal article" date="2003" name="FEMS Microbiol. Lett.">
        <title>Organization of the biosynthetic gene cluster for the polyketide macrolide mycinamicin in Micromonospora griseorubida.</title>
        <authorList>
            <person name="Anzai Y."/>
            <person name="Saito N."/>
            <person name="Tanaka M."/>
            <person name="Kinoshita K."/>
            <person name="Koyama Y."/>
            <person name="Kato F."/>
        </authorList>
    </citation>
    <scope>NUCLEOTIDE SEQUENCE [GENOMIC DNA]</scope>
</reference>
<reference key="2">
    <citation type="journal article" date="2008" name="Chem. Biol.">
        <title>Functional analysis of MycCI and MycG, cytochrome P450 enzymes involved in biosynthesis of mycinamicin macrolide antibiotics.</title>
        <authorList>
            <person name="Anzai Y."/>
            <person name="Li S."/>
            <person name="Chaulagain M.R."/>
            <person name="Kinoshita K."/>
            <person name="Kato F."/>
            <person name="Montgomery J."/>
            <person name="Sherman D.H."/>
        </authorList>
    </citation>
    <scope>FUNCTION</scope>
    <scope>PATHWAY</scope>
</reference>
<accession>Q83WF4</accession>
<gene>
    <name evidence="4" type="primary">mycCII</name>
</gene>
<sequence>MRIVLDAERCVGAGQCEATAPELFTQGDDGLGLVRDRPVTPELLGPAREAVDRCPVRAIRIESSVRTGWARGAG</sequence>
<comment type="function">
    <text evidence="3">Specific electron transport protein capable of effectively supporting cytochrome P450 MycCI activity in the biosynthesis of mycinamicin, a 16-membered macrolide antibiotic.</text>
</comment>
<comment type="cofactor">
    <cofactor evidence="1">
        <name>[3Fe-4S] cluster</name>
        <dbReference type="ChEBI" id="CHEBI:21137"/>
    </cofactor>
    <text evidence="1">Binds 1 [3Fe-4S] cluster.</text>
</comment>
<comment type="pathway">
    <text evidence="7">Antibiotic biosynthesis; mycinamicin biosynthesis.</text>
</comment>
<keyword id="KW-0003">3Fe-4S</keyword>
<keyword id="KW-0045">Antibiotic biosynthesis</keyword>
<keyword id="KW-0249">Electron transport</keyword>
<keyword id="KW-0408">Iron</keyword>
<keyword id="KW-0411">Iron-sulfur</keyword>
<keyword id="KW-0479">Metal-binding</keyword>
<keyword id="KW-0813">Transport</keyword>
<dbReference type="EMBL" id="AB089954">
    <property type="protein sequence ID" value="BAC57024.1"/>
    <property type="molecule type" value="Genomic_DNA"/>
</dbReference>
<dbReference type="SMR" id="Q83WF4"/>
<dbReference type="KEGG" id="ag:BAC57024"/>
<dbReference type="BioCyc" id="MetaCyc:MONOMER-18370"/>
<dbReference type="UniPathway" id="UPA01019"/>
<dbReference type="GO" id="GO:0051538">
    <property type="term" value="F:3 iron, 4 sulfur cluster binding"/>
    <property type="evidence" value="ECO:0007669"/>
    <property type="project" value="UniProtKB-KW"/>
</dbReference>
<dbReference type="GO" id="GO:0009055">
    <property type="term" value="F:electron transfer activity"/>
    <property type="evidence" value="ECO:0007669"/>
    <property type="project" value="InterPro"/>
</dbReference>
<dbReference type="GO" id="GO:0005506">
    <property type="term" value="F:iron ion binding"/>
    <property type="evidence" value="ECO:0007669"/>
    <property type="project" value="InterPro"/>
</dbReference>
<dbReference type="GO" id="GO:0017000">
    <property type="term" value="P:antibiotic biosynthetic process"/>
    <property type="evidence" value="ECO:0007669"/>
    <property type="project" value="UniProtKB-KW"/>
</dbReference>
<dbReference type="Gene3D" id="3.30.70.20">
    <property type="match status" value="1"/>
</dbReference>
<dbReference type="InterPro" id="IPR001080">
    <property type="entry name" value="3Fe4S_ferredoxin"/>
</dbReference>
<dbReference type="InterPro" id="IPR017896">
    <property type="entry name" value="4Fe4S_Fe-S-bd"/>
</dbReference>
<dbReference type="InterPro" id="IPR051269">
    <property type="entry name" value="Fe-S_cluster_ET"/>
</dbReference>
<dbReference type="PANTHER" id="PTHR36923">
    <property type="entry name" value="FERREDOXIN"/>
    <property type="match status" value="1"/>
</dbReference>
<dbReference type="PANTHER" id="PTHR36923:SF3">
    <property type="entry name" value="FERREDOXIN"/>
    <property type="match status" value="1"/>
</dbReference>
<dbReference type="Pfam" id="PF13459">
    <property type="entry name" value="Fer4_15"/>
    <property type="match status" value="1"/>
</dbReference>
<dbReference type="PRINTS" id="PR00352">
    <property type="entry name" value="3FE4SFRDOXIN"/>
</dbReference>
<dbReference type="SUPFAM" id="SSF54862">
    <property type="entry name" value="4Fe-4S ferredoxins"/>
    <property type="match status" value="1"/>
</dbReference>
<dbReference type="PROSITE" id="PS51379">
    <property type="entry name" value="4FE4S_FER_2"/>
    <property type="match status" value="1"/>
</dbReference>
<organism>
    <name type="scientific">Micromonospora griseorubida</name>
    <dbReference type="NCBI Taxonomy" id="28040"/>
    <lineage>
        <taxon>Bacteria</taxon>
        <taxon>Bacillati</taxon>
        <taxon>Actinomycetota</taxon>
        <taxon>Actinomycetes</taxon>
        <taxon>Micromonosporales</taxon>
        <taxon>Micromonosporaceae</taxon>
        <taxon>Micromonospora</taxon>
    </lineage>
</organism>
<name>MYCII_MICGR</name>
<evidence type="ECO:0000250" key="1"/>
<evidence type="ECO:0000255" key="2">
    <source>
        <dbReference type="PROSITE-ProRule" id="PRU00711"/>
    </source>
</evidence>
<evidence type="ECO:0000269" key="3">
    <source>
    </source>
</evidence>
<evidence type="ECO:0000303" key="4">
    <source>
    </source>
</evidence>
<evidence type="ECO:0000303" key="5">
    <source>
    </source>
</evidence>
<evidence type="ECO:0000305" key="6">
    <source>
    </source>
</evidence>
<evidence type="ECO:0000305" key="7">
    <source>
    </source>
</evidence>